<keyword id="KW-0963">Cytoplasm</keyword>
<keyword id="KW-0413">Isomerase</keyword>
<keyword id="KW-0627">Porphyrin biosynthesis</keyword>
<keyword id="KW-0663">Pyridoxal phosphate</keyword>
<evidence type="ECO:0000255" key="1">
    <source>
        <dbReference type="HAMAP-Rule" id="MF_00375"/>
    </source>
</evidence>
<name>GSA2_STAAR</name>
<organism>
    <name type="scientific">Staphylococcus aureus (strain MRSA252)</name>
    <dbReference type="NCBI Taxonomy" id="282458"/>
    <lineage>
        <taxon>Bacteria</taxon>
        <taxon>Bacillati</taxon>
        <taxon>Bacillota</taxon>
        <taxon>Bacilli</taxon>
        <taxon>Bacillales</taxon>
        <taxon>Staphylococcaceae</taxon>
        <taxon>Staphylococcus</taxon>
    </lineage>
</organism>
<proteinExistence type="inferred from homology"/>
<sequence>MNFSESERLQQLSNEYILGGVNSPSRSYKAVGGGAPVVMKEGHGAYLYDVDGNKFIDYLQAYGPIITGHAHPHITKAIQEQAAKGVLFGTPTELEIEFSKKLRDAIPSLEKIRFVNSGTEAVMTTIRVARAYTKRNKIIKFAGSYHGHSDLVLVAAGSGPSQLGSPDSAGVPESVAREVITVPFNDINAYKEAIEFWGDEIAAVLVEPIVGNFGMVMPQPGFLEEVNEISHSNGTLVIYDEVITAFRFHYGAAQDLLGVIPDLTAFGKIVGGGLPIGGYGGRQDIMEQVAPLGPAYQAGTMAGNPLSMKAGIALLEVLEQDGVYEKLDSLGQQLEEGLLKLIEKHNITATINRIYGSLTLYFTDEKVTHYDQVEHSDGEAFGKFFKLMLNQGINLAPSKFEAWFLTTEHTEEDIKQTLKAADYAFSQMK</sequence>
<accession>Q6GFJ3</accession>
<reference key="1">
    <citation type="journal article" date="2004" name="Proc. Natl. Acad. Sci. U.S.A.">
        <title>Complete genomes of two clinical Staphylococcus aureus strains: evidence for the rapid evolution of virulence and drug resistance.</title>
        <authorList>
            <person name="Holden M.T.G."/>
            <person name="Feil E.J."/>
            <person name="Lindsay J.A."/>
            <person name="Peacock S.J."/>
            <person name="Day N.P.J."/>
            <person name="Enright M.C."/>
            <person name="Foster T.J."/>
            <person name="Moore C.E."/>
            <person name="Hurst L."/>
            <person name="Atkin R."/>
            <person name="Barron A."/>
            <person name="Bason N."/>
            <person name="Bentley S.D."/>
            <person name="Chillingworth C."/>
            <person name="Chillingworth T."/>
            <person name="Churcher C."/>
            <person name="Clark L."/>
            <person name="Corton C."/>
            <person name="Cronin A."/>
            <person name="Doggett J."/>
            <person name="Dowd L."/>
            <person name="Feltwell T."/>
            <person name="Hance Z."/>
            <person name="Harris B."/>
            <person name="Hauser H."/>
            <person name="Holroyd S."/>
            <person name="Jagels K."/>
            <person name="James K.D."/>
            <person name="Lennard N."/>
            <person name="Line A."/>
            <person name="Mayes R."/>
            <person name="Moule S."/>
            <person name="Mungall K."/>
            <person name="Ormond D."/>
            <person name="Quail M.A."/>
            <person name="Rabbinowitsch E."/>
            <person name="Rutherford K.M."/>
            <person name="Sanders M."/>
            <person name="Sharp S."/>
            <person name="Simmonds M."/>
            <person name="Stevens K."/>
            <person name="Whitehead S."/>
            <person name="Barrell B.G."/>
            <person name="Spratt B.G."/>
            <person name="Parkhill J."/>
        </authorList>
    </citation>
    <scope>NUCLEOTIDE SEQUENCE [LARGE SCALE GENOMIC DNA]</scope>
    <source>
        <strain>MRSA252</strain>
    </source>
</reference>
<protein>
    <recommendedName>
        <fullName evidence="1">Glutamate-1-semialdehyde 2,1-aminomutase 2</fullName>
        <shortName evidence="1">GSA 2</shortName>
        <ecNumber evidence="1">5.4.3.8</ecNumber>
    </recommendedName>
    <alternativeName>
        <fullName evidence="1">Glutamate-1-semialdehyde aminotransferase 2</fullName>
        <shortName evidence="1">GSA-AT 2</shortName>
    </alternativeName>
</protein>
<feature type="chain" id="PRO_0000120448" description="Glutamate-1-semialdehyde 2,1-aminomutase 2">
    <location>
        <begin position="1"/>
        <end position="429"/>
    </location>
</feature>
<feature type="modified residue" description="N6-(pyridoxal phosphate)lysine" evidence="1">
    <location>
        <position position="268"/>
    </location>
</feature>
<gene>
    <name evidence="1" type="primary">hemL2</name>
    <name type="synonym">gsaB</name>
    <name type="ordered locus">SAR1954</name>
</gene>
<comment type="catalytic activity">
    <reaction evidence="1">
        <text>(S)-4-amino-5-oxopentanoate = 5-aminolevulinate</text>
        <dbReference type="Rhea" id="RHEA:14265"/>
        <dbReference type="ChEBI" id="CHEBI:57501"/>
        <dbReference type="ChEBI" id="CHEBI:356416"/>
        <dbReference type="EC" id="5.4.3.8"/>
    </reaction>
</comment>
<comment type="cofactor">
    <cofactor evidence="1">
        <name>pyridoxal 5'-phosphate</name>
        <dbReference type="ChEBI" id="CHEBI:597326"/>
    </cofactor>
</comment>
<comment type="pathway">
    <text evidence="1">Porphyrin-containing compound metabolism; protoporphyrin-IX biosynthesis; 5-aminolevulinate from L-glutamyl-tRNA(Glu): step 2/2.</text>
</comment>
<comment type="subunit">
    <text evidence="1">Homodimer.</text>
</comment>
<comment type="subcellular location">
    <subcellularLocation>
        <location evidence="1">Cytoplasm</location>
    </subcellularLocation>
</comment>
<comment type="similarity">
    <text evidence="1">Belongs to the class-III pyridoxal-phosphate-dependent aminotransferase family. HemL subfamily.</text>
</comment>
<dbReference type="EC" id="5.4.3.8" evidence="1"/>
<dbReference type="EMBL" id="BX571856">
    <property type="protein sequence ID" value="CAG40941.1"/>
    <property type="molecule type" value="Genomic_DNA"/>
</dbReference>
<dbReference type="RefSeq" id="WP_001011603.1">
    <property type="nucleotide sequence ID" value="NC_002952.2"/>
</dbReference>
<dbReference type="SMR" id="Q6GFJ3"/>
<dbReference type="KEGG" id="sar:SAR1954"/>
<dbReference type="HOGENOM" id="CLU_016922_1_5_9"/>
<dbReference type="UniPathway" id="UPA00251">
    <property type="reaction ID" value="UER00317"/>
</dbReference>
<dbReference type="Proteomes" id="UP000000596">
    <property type="component" value="Chromosome"/>
</dbReference>
<dbReference type="GO" id="GO:0005737">
    <property type="term" value="C:cytoplasm"/>
    <property type="evidence" value="ECO:0007669"/>
    <property type="project" value="UniProtKB-SubCell"/>
</dbReference>
<dbReference type="GO" id="GO:0042286">
    <property type="term" value="F:glutamate-1-semialdehyde 2,1-aminomutase activity"/>
    <property type="evidence" value="ECO:0007669"/>
    <property type="project" value="UniProtKB-UniRule"/>
</dbReference>
<dbReference type="GO" id="GO:0030170">
    <property type="term" value="F:pyridoxal phosphate binding"/>
    <property type="evidence" value="ECO:0007669"/>
    <property type="project" value="InterPro"/>
</dbReference>
<dbReference type="GO" id="GO:0008483">
    <property type="term" value="F:transaminase activity"/>
    <property type="evidence" value="ECO:0007669"/>
    <property type="project" value="InterPro"/>
</dbReference>
<dbReference type="GO" id="GO:0006782">
    <property type="term" value="P:protoporphyrinogen IX biosynthetic process"/>
    <property type="evidence" value="ECO:0007669"/>
    <property type="project" value="UniProtKB-UniRule"/>
</dbReference>
<dbReference type="CDD" id="cd00610">
    <property type="entry name" value="OAT_like"/>
    <property type="match status" value="1"/>
</dbReference>
<dbReference type="FunFam" id="3.40.640.10:FF:000021">
    <property type="entry name" value="Glutamate-1-semialdehyde 2,1-aminomutase"/>
    <property type="match status" value="1"/>
</dbReference>
<dbReference type="Gene3D" id="3.90.1150.10">
    <property type="entry name" value="Aspartate Aminotransferase, domain 1"/>
    <property type="match status" value="1"/>
</dbReference>
<dbReference type="Gene3D" id="3.40.640.10">
    <property type="entry name" value="Type I PLP-dependent aspartate aminotransferase-like (Major domain)"/>
    <property type="match status" value="1"/>
</dbReference>
<dbReference type="HAMAP" id="MF_00375">
    <property type="entry name" value="HemL_aminotrans_3"/>
    <property type="match status" value="1"/>
</dbReference>
<dbReference type="InterPro" id="IPR004639">
    <property type="entry name" value="4pyrrol_synth_GluAld_NH2Trfase"/>
</dbReference>
<dbReference type="InterPro" id="IPR005814">
    <property type="entry name" value="Aminotrans_3"/>
</dbReference>
<dbReference type="InterPro" id="IPR049704">
    <property type="entry name" value="Aminotrans_3_PPA_site"/>
</dbReference>
<dbReference type="InterPro" id="IPR015424">
    <property type="entry name" value="PyrdxlP-dep_Trfase"/>
</dbReference>
<dbReference type="InterPro" id="IPR015421">
    <property type="entry name" value="PyrdxlP-dep_Trfase_major"/>
</dbReference>
<dbReference type="InterPro" id="IPR015422">
    <property type="entry name" value="PyrdxlP-dep_Trfase_small"/>
</dbReference>
<dbReference type="NCBIfam" id="TIGR00713">
    <property type="entry name" value="hemL"/>
    <property type="match status" value="1"/>
</dbReference>
<dbReference type="NCBIfam" id="NF000818">
    <property type="entry name" value="PRK00062.1"/>
    <property type="match status" value="1"/>
</dbReference>
<dbReference type="NCBIfam" id="NF009055">
    <property type="entry name" value="PRK12389.1"/>
    <property type="match status" value="1"/>
</dbReference>
<dbReference type="PANTHER" id="PTHR43713">
    <property type="entry name" value="GLUTAMATE-1-SEMIALDEHYDE 2,1-AMINOMUTASE"/>
    <property type="match status" value="1"/>
</dbReference>
<dbReference type="PANTHER" id="PTHR43713:SF1">
    <property type="entry name" value="GLUTAMATE-1-SEMIALDEHYDE 2,1-AMINOMUTASE 2"/>
    <property type="match status" value="1"/>
</dbReference>
<dbReference type="Pfam" id="PF00202">
    <property type="entry name" value="Aminotran_3"/>
    <property type="match status" value="1"/>
</dbReference>
<dbReference type="SUPFAM" id="SSF53383">
    <property type="entry name" value="PLP-dependent transferases"/>
    <property type="match status" value="1"/>
</dbReference>
<dbReference type="PROSITE" id="PS00600">
    <property type="entry name" value="AA_TRANSFER_CLASS_3"/>
    <property type="match status" value="1"/>
</dbReference>